<organism>
    <name type="scientific">Mus musculus</name>
    <name type="common">Mouse</name>
    <dbReference type="NCBI Taxonomy" id="10090"/>
    <lineage>
        <taxon>Eukaryota</taxon>
        <taxon>Metazoa</taxon>
        <taxon>Chordata</taxon>
        <taxon>Craniata</taxon>
        <taxon>Vertebrata</taxon>
        <taxon>Euteleostomi</taxon>
        <taxon>Mammalia</taxon>
        <taxon>Eutheria</taxon>
        <taxon>Euarchontoglires</taxon>
        <taxon>Glires</taxon>
        <taxon>Rodentia</taxon>
        <taxon>Myomorpha</taxon>
        <taxon>Muroidea</taxon>
        <taxon>Muridae</taxon>
        <taxon>Murinae</taxon>
        <taxon>Mus</taxon>
        <taxon>Mus</taxon>
    </lineage>
</organism>
<keyword id="KW-0025">Alternative splicing</keyword>
<keyword id="KW-1003">Cell membrane</keyword>
<keyword id="KW-0963">Cytoplasm</keyword>
<keyword id="KW-0206">Cytoskeleton</keyword>
<keyword id="KW-0256">Endoplasmic reticulum</keyword>
<keyword id="KW-0472">Membrane</keyword>
<keyword id="KW-0597">Phosphoprotein</keyword>
<keyword id="KW-1185">Reference proteome</keyword>
<keyword id="KW-0703">Sarcoplasmic reticulum</keyword>
<keyword id="KW-0812">Transmembrane</keyword>
<keyword id="KW-1133">Transmembrane helix</keyword>
<accession>O70622</accession>
<accession>O70620</accession>
<reference key="1">
    <citation type="journal article" date="1998" name="Mamm. Genome">
        <title>Molecular cloning of a novel mouse gene with predominant muscle and neural expression.</title>
        <authorList>
            <person name="Geisler J.G."/>
            <person name="Stubbs L.J."/>
            <person name="Wasserman W.W."/>
            <person name="Mucenski M.L."/>
        </authorList>
    </citation>
    <scope>NUCLEOTIDE SEQUENCE [GENOMIC DNA / MRNA] (ISOFORMS 1 AND 2)</scope>
    <scope>TISSUE SPECIFICITY</scope>
    <source>
        <strain>129/Sv</strain>
        <strain>FVB/N</strain>
        <tissue>Cerebellum</tissue>
        <tissue>Skeletal muscle</tissue>
    </source>
</reference>
<reference key="2">
    <citation type="journal article" date="2004" name="Genome Res.">
        <title>The status, quality, and expansion of the NIH full-length cDNA project: the Mammalian Gene Collection (MGC).</title>
        <authorList>
            <consortium name="The MGC Project Team"/>
        </authorList>
    </citation>
    <scope>NUCLEOTIDE SEQUENCE [LARGE SCALE MRNA] (ISOFORM 1)</scope>
    <source>
        <tissue>Retina</tissue>
    </source>
</reference>
<reference key="3">
    <citation type="journal article" date="1999" name="J. Muscle Res. Cell Motil.">
        <title>Nspl1, a new Z-band-associated protein.</title>
        <authorList>
            <person name="Geisler J.G."/>
            <person name="Palmer R.J."/>
            <person name="Stubbs L.J."/>
            <person name="Mucenski M.L."/>
        </authorList>
    </citation>
    <scope>SUBCELLULAR LOCATION</scope>
</reference>
<reference key="4">
    <citation type="journal article" date="2004" name="Mol. Cell. Proteomics">
        <title>Phosphoproteomic analysis of the developing mouse brain.</title>
        <authorList>
            <person name="Ballif B.A."/>
            <person name="Villen J."/>
            <person name="Beausoleil S.A."/>
            <person name="Schwartz D."/>
            <person name="Gygi S.P."/>
        </authorList>
    </citation>
    <scope>PHOSPHORYLATION [LARGE SCALE ANALYSIS] AT SER-44</scope>
    <scope>IDENTIFICATION BY MASS SPECTROMETRY [LARGE SCALE ANALYSIS]</scope>
    <source>
        <tissue>Embryonic brain</tissue>
    </source>
</reference>
<reference key="5">
    <citation type="journal article" date="2009" name="Diabetes">
        <title>Functional role of neuroendocrine-specific protein-like 1 in membrane translocation of GLUT4.</title>
        <authorList>
            <person name="Ikemoto T."/>
            <person name="Hosoya T."/>
            <person name="Takata K."/>
            <person name="Aoyama H."/>
            <person name="Hiramatsu T."/>
            <person name="Onoe H."/>
            <person name="Suzuki M."/>
            <person name="Endo M."/>
        </authorList>
    </citation>
    <scope>FUNCTION</scope>
    <scope>SUBCELLULAR LOCATION</scope>
    <scope>TISSUE SPECIFICITY</scope>
    <scope>DISRUPTION PHENOTYPE</scope>
</reference>
<reference key="6">
    <citation type="journal article" date="2010" name="Cell">
        <title>A tissue-specific atlas of mouse protein phosphorylation and expression.</title>
        <authorList>
            <person name="Huttlin E.L."/>
            <person name="Jedrychowski M.P."/>
            <person name="Elias J.E."/>
            <person name="Goswami T."/>
            <person name="Rad R."/>
            <person name="Beausoleil S.A."/>
            <person name="Villen J."/>
            <person name="Haas W."/>
            <person name="Sowa M.E."/>
            <person name="Gygi S.P."/>
        </authorList>
    </citation>
    <scope>PHOSPHORYLATION [LARGE SCALE ANALYSIS] AT SER-44; SER-226 AND SER-228</scope>
    <scope>IDENTIFICATION BY MASS SPECTROMETRY [LARGE SCALE ANALYSIS]</scope>
    <source>
        <tissue>Brain</tissue>
        <tissue>Brown adipose tissue</tissue>
        <tissue>Heart</tissue>
        <tissue>Kidney</tissue>
        <tissue>Lung</tissue>
        <tissue>Spleen</tissue>
    </source>
</reference>
<proteinExistence type="evidence at protein level"/>
<comment type="function">
    <text evidence="1 2 7">Inhibits amyloid precursor protein processing, probably by blocking BACE1 activity (By similarity). Enhances trafficking of the glutamate transporter SLC1A1/EAAC1 from the endoplasmic reticulum to the cell surface (By similarity). Plays a role in the translocation of SLC2A4/GLUT4 from intracellular membranes to the cell membrane which facilitates the uptake of glucose into the cell (PubMed:19720795).</text>
</comment>
<comment type="subunit">
    <text evidence="1 2">Interacts with SPAST (By similarity). Interacts with BACE1 (By similarity). Interacts (via first transmembrane domain) with ARL6IP5/GTRAP3-18 (By similarity). Interacts (via N-terminus) with SLC1A1/EAAC1; the interaction promotes cell surface expression of SLC1A1 (By similarity).</text>
</comment>
<comment type="subcellular location">
    <subcellularLocation>
        <location evidence="1">Endoplasmic reticulum membrane</location>
        <topology evidence="3">Multi-pass membrane protein</topology>
    </subcellularLocation>
    <subcellularLocation>
        <location evidence="7">Sarcoplasmic reticulum membrane</location>
        <topology evidence="3">Multi-pass membrane protein</topology>
    </subcellularLocation>
    <subcellularLocation>
        <location evidence="2">Cell membrane</location>
        <topology evidence="3">Multi-pass membrane protein</topology>
    </subcellularLocation>
    <subcellularLocation>
        <location evidence="7">Cell membrane</location>
        <location evidence="7">Sarcolemma</location>
        <topology evidence="3">Multi-pass membrane protein</topology>
    </subcellularLocation>
    <subcellularLocation>
        <location evidence="7">Cell membrane</location>
        <location evidence="7">Sarcolemma</location>
        <location evidence="7">T-tubule</location>
        <topology evidence="3">Multi-pass membrane protein</topology>
    </subcellularLocation>
    <subcellularLocation>
        <location evidence="6">Cytoplasm</location>
        <location evidence="6">Myofibril</location>
        <location evidence="6">Sarcomere</location>
        <location evidence="6">Z line</location>
    </subcellularLocation>
    <subcellularLocation>
        <location evidence="6">Cytoplasm</location>
        <location evidence="6">Cytoskeleton</location>
    </subcellularLocation>
    <text evidence="6">Localizes to intermediate filaments in mononucleated myoblasts and to Z lines in mature myotubes.</text>
</comment>
<comment type="alternative products">
    <event type="alternative splicing"/>
    <isoform>
        <id>O70622-1</id>
        <name>1</name>
        <name>Brain</name>
        <sequence type="displayed"/>
    </isoform>
    <isoform>
        <id>O70622-2</id>
        <name>2</name>
        <name>Muscle</name>
        <sequence type="described" ref="VSP_005650 VSP_005651"/>
    </isoform>
</comment>
<comment type="tissue specificity">
    <text evidence="7 8">Detected in skeletal and cardiac muscle (at protein level) (PubMed:19720795). Expressed predominantly in neural and muscular tissues (PubMed:9530622).</text>
</comment>
<comment type="disruption phenotype">
    <text evidence="7">Impaired exercise-induced SLC2A4/GLUT4 translocation to the cell membrane, impaired exercise-induced glucose uptake in skeletal muscle cells and impaired ability to reduce blood glucose levels on contraction/exercise.</text>
</comment>
<evidence type="ECO:0000250" key="1">
    <source>
        <dbReference type="UniProtKB" id="O75298"/>
    </source>
</evidence>
<evidence type="ECO:0000250" key="2">
    <source>
        <dbReference type="UniProtKB" id="Q6WN19"/>
    </source>
</evidence>
<evidence type="ECO:0000255" key="3"/>
<evidence type="ECO:0000255" key="4">
    <source>
        <dbReference type="PROSITE-ProRule" id="PRU00170"/>
    </source>
</evidence>
<evidence type="ECO:0000256" key="5">
    <source>
        <dbReference type="SAM" id="MobiDB-lite"/>
    </source>
</evidence>
<evidence type="ECO:0000269" key="6">
    <source>
    </source>
</evidence>
<evidence type="ECO:0000269" key="7">
    <source>
    </source>
</evidence>
<evidence type="ECO:0000269" key="8">
    <source>
    </source>
</evidence>
<evidence type="ECO:0000303" key="9">
    <source>
    </source>
</evidence>
<evidence type="ECO:0000312" key="10">
    <source>
        <dbReference type="MGI" id="MGI:107612"/>
    </source>
</evidence>
<evidence type="ECO:0007744" key="11">
    <source>
    </source>
</evidence>
<evidence type="ECO:0007744" key="12">
    <source>
    </source>
</evidence>
<gene>
    <name evidence="10" type="primary">Rtn2</name>
    <name evidence="9" type="synonym">Nspl1</name>
</gene>
<sequence length="471" mass="51347">MGQVLPVFAHCKEAPSTASSTPDSTEGGNDDSDFRELHTAREFSEDEEEETTSQDWGTPRELTFSYIAFDGVVGSGGRRDSVVRRPRPQGRSVSEPRDPPQQSGLGDSLESIPSLSQSPEPGRRGDPDPVPPAERPLEELRLRLDQLGWVVRSAGSGEDSATSSSTPLENEEPDGLEASEAGEETNLELRLAQSLHLQLEVLTPQLSPSSGTPQAHTPSPQRSQDSNSGPDDEPLLNVVEEHWRLLEQEPITAQCLDSTDQSEFMLEPLLLVADLLYWKDTRTSGAVFTGLMASLLCLLHFSIVSVAAHLALLGLCATISLRVYRKVLQAVHRGDGTNPFQAYLDMDLTLTREQTERLSQQIASHVVSTATQLRHFFLVEDLVDSLKLALLFYILTFVGAIFNGLTLVILGVVALFTVPLLYRQHQAQIDQYVGLVTNQLSHIKAKIRAKIPGTGTLAPTASVSGSKAKAE</sequence>
<protein>
    <recommendedName>
        <fullName>Reticulon-2</fullName>
    </recommendedName>
    <alternativeName>
        <fullName evidence="9">Neuroendocrine-specific protein-like 1</fullName>
        <shortName evidence="9">NSP-like protein 1</shortName>
    </alternativeName>
    <alternativeName>
        <fullName>Neuroendocrine-specific protein-like I</fullName>
        <shortName>NSP-like protein I</shortName>
        <shortName>NSPLI</shortName>
    </alternativeName>
</protein>
<dbReference type="EMBL" id="AF038537">
    <property type="protein sequence ID" value="AAC14906.1"/>
    <property type="molecule type" value="Genomic_DNA"/>
</dbReference>
<dbReference type="EMBL" id="AF038537">
    <property type="protein sequence ID" value="AAC14907.1"/>
    <property type="molecule type" value="Genomic_DNA"/>
</dbReference>
<dbReference type="EMBL" id="AF038538">
    <property type="protein sequence ID" value="AAC14908.1"/>
    <property type="molecule type" value="mRNA"/>
</dbReference>
<dbReference type="EMBL" id="AF038539">
    <property type="protein sequence ID" value="AAC14909.1"/>
    <property type="molecule type" value="mRNA"/>
</dbReference>
<dbReference type="EMBL" id="AF093624">
    <property type="protein sequence ID" value="AAD13195.1"/>
    <property type="molecule type" value="Genomic_DNA"/>
</dbReference>
<dbReference type="EMBL" id="BC031370">
    <property type="protein sequence ID" value="AAH31370.1"/>
    <property type="molecule type" value="mRNA"/>
</dbReference>
<dbReference type="CCDS" id="CCDS20896.1">
    <molecule id="O70622-1"/>
</dbReference>
<dbReference type="CCDS" id="CCDS39797.1">
    <molecule id="O70622-2"/>
</dbReference>
<dbReference type="RefSeq" id="NP_001020535.1">
    <molecule id="O70622-2"/>
    <property type="nucleotide sequence ID" value="NM_001025364.3"/>
</dbReference>
<dbReference type="RefSeq" id="NP_038676.1">
    <molecule id="O70622-1"/>
    <property type="nucleotide sequence ID" value="NM_013648.6"/>
</dbReference>
<dbReference type="SMR" id="O70622"/>
<dbReference type="BioGRID" id="203033">
    <property type="interactions" value="1"/>
</dbReference>
<dbReference type="FunCoup" id="O70622">
    <property type="interactions" value="62"/>
</dbReference>
<dbReference type="STRING" id="10090.ENSMUSP00000032559"/>
<dbReference type="iPTMnet" id="O70622"/>
<dbReference type="PhosphoSitePlus" id="O70622"/>
<dbReference type="jPOST" id="O70622"/>
<dbReference type="PaxDb" id="10090-ENSMUSP00000032559"/>
<dbReference type="PeptideAtlas" id="O70622"/>
<dbReference type="ProteomicsDB" id="260954">
    <molecule id="O70622-1"/>
</dbReference>
<dbReference type="ProteomicsDB" id="260955">
    <molecule id="O70622-2"/>
</dbReference>
<dbReference type="Antibodypedia" id="31344">
    <property type="antibodies" value="147 antibodies from 26 providers"/>
</dbReference>
<dbReference type="DNASU" id="20167"/>
<dbReference type="Ensembl" id="ENSMUST00000032559.17">
    <molecule id="O70622-1"/>
    <property type="protein sequence ID" value="ENSMUSP00000032559.10"/>
    <property type="gene ID" value="ENSMUSG00000030401.17"/>
</dbReference>
<dbReference type="Ensembl" id="ENSMUST00000108468.5">
    <molecule id="O70622-2"/>
    <property type="protein sequence ID" value="ENSMUSP00000104108.4"/>
    <property type="gene ID" value="ENSMUSG00000030401.17"/>
</dbReference>
<dbReference type="GeneID" id="20167"/>
<dbReference type="KEGG" id="mmu:20167"/>
<dbReference type="UCSC" id="uc009flh.2">
    <molecule id="O70622-1"/>
    <property type="organism name" value="mouse"/>
</dbReference>
<dbReference type="AGR" id="MGI:107612"/>
<dbReference type="CTD" id="6253"/>
<dbReference type="MGI" id="MGI:107612">
    <property type="gene designation" value="Rtn2"/>
</dbReference>
<dbReference type="VEuPathDB" id="HostDB:ENSMUSG00000030401"/>
<dbReference type="eggNOG" id="KOG1792">
    <property type="taxonomic scope" value="Eukaryota"/>
</dbReference>
<dbReference type="GeneTree" id="ENSGT00940000160599"/>
<dbReference type="HOGENOM" id="CLU_508939_0_0_1"/>
<dbReference type="InParanoid" id="O70622"/>
<dbReference type="OMA" id="EESEMCE"/>
<dbReference type="OrthoDB" id="567788at2759"/>
<dbReference type="PhylomeDB" id="O70622"/>
<dbReference type="TreeFam" id="TF105431"/>
<dbReference type="BioGRID-ORCS" id="20167">
    <property type="hits" value="2 hits in 76 CRISPR screens"/>
</dbReference>
<dbReference type="ChiTaRS" id="Rtn2">
    <property type="organism name" value="mouse"/>
</dbReference>
<dbReference type="PRO" id="PR:O70622"/>
<dbReference type="Proteomes" id="UP000000589">
    <property type="component" value="Chromosome 7"/>
</dbReference>
<dbReference type="RNAct" id="O70622">
    <property type="molecule type" value="protein"/>
</dbReference>
<dbReference type="Bgee" id="ENSMUSG00000030401">
    <property type="expression patterns" value="Expressed in triceps brachii and 225 other cell types or tissues"/>
</dbReference>
<dbReference type="ExpressionAtlas" id="O70622">
    <property type="expression patterns" value="baseline and differential"/>
</dbReference>
<dbReference type="GO" id="GO:0009986">
    <property type="term" value="C:cell surface"/>
    <property type="evidence" value="ECO:0007669"/>
    <property type="project" value="Ensembl"/>
</dbReference>
<dbReference type="GO" id="GO:0005882">
    <property type="term" value="C:intermediate filament"/>
    <property type="evidence" value="ECO:0000314"/>
    <property type="project" value="UniProtKB"/>
</dbReference>
<dbReference type="GO" id="GO:0033017">
    <property type="term" value="C:sarcoplasmic reticulum membrane"/>
    <property type="evidence" value="ECO:0007669"/>
    <property type="project" value="UniProtKB-SubCell"/>
</dbReference>
<dbReference type="GO" id="GO:0030315">
    <property type="term" value="C:T-tubule"/>
    <property type="evidence" value="ECO:0000314"/>
    <property type="project" value="MGI"/>
</dbReference>
<dbReference type="GO" id="GO:0014802">
    <property type="term" value="C:terminal cisterna"/>
    <property type="evidence" value="ECO:0000314"/>
    <property type="project" value="MGI"/>
</dbReference>
<dbReference type="GO" id="GO:0030018">
    <property type="term" value="C:Z disc"/>
    <property type="evidence" value="ECO:0000314"/>
    <property type="project" value="UniProtKB"/>
</dbReference>
<dbReference type="GO" id="GO:0010467">
    <property type="term" value="P:gene expression"/>
    <property type="evidence" value="ECO:0000353"/>
    <property type="project" value="MGI"/>
</dbReference>
<dbReference type="GO" id="GO:0065002">
    <property type="term" value="P:intracellular protein transmembrane transport"/>
    <property type="evidence" value="ECO:0000315"/>
    <property type="project" value="MGI"/>
</dbReference>
<dbReference type="GO" id="GO:1902430">
    <property type="term" value="P:negative regulation of amyloid-beta formation"/>
    <property type="evidence" value="ECO:0000250"/>
    <property type="project" value="UniProtKB"/>
</dbReference>
<dbReference type="GO" id="GO:0015031">
    <property type="term" value="P:protein transport"/>
    <property type="evidence" value="ECO:0000266"/>
    <property type="project" value="MGI"/>
</dbReference>
<dbReference type="GO" id="GO:0046324">
    <property type="term" value="P:regulation of D-glucose import"/>
    <property type="evidence" value="ECO:0000315"/>
    <property type="project" value="MGI"/>
</dbReference>
<dbReference type="FunFam" id="1.20.5.2480:FF:000001">
    <property type="entry name" value="Reticulon"/>
    <property type="match status" value="1"/>
</dbReference>
<dbReference type="Gene3D" id="1.20.5.2480">
    <property type="match status" value="1"/>
</dbReference>
<dbReference type="InterPro" id="IPR003388">
    <property type="entry name" value="Reticulon"/>
</dbReference>
<dbReference type="InterPro" id="IPR046964">
    <property type="entry name" value="RTN1-4"/>
</dbReference>
<dbReference type="PANTHER" id="PTHR45799:SF3">
    <property type="entry name" value="RETICULON-2"/>
    <property type="match status" value="1"/>
</dbReference>
<dbReference type="PANTHER" id="PTHR45799">
    <property type="entry name" value="RETICULON-LIKE PROTEIN"/>
    <property type="match status" value="1"/>
</dbReference>
<dbReference type="Pfam" id="PF02453">
    <property type="entry name" value="Reticulon"/>
    <property type="match status" value="1"/>
</dbReference>
<dbReference type="PROSITE" id="PS50845">
    <property type="entry name" value="RETICULON"/>
    <property type="match status" value="1"/>
</dbReference>
<feature type="chain" id="PRO_0000168162" description="Reticulon-2">
    <location>
        <begin position="1"/>
        <end position="471"/>
    </location>
</feature>
<feature type="transmembrane region" description="Helical" evidence="3">
    <location>
        <begin position="295"/>
        <end position="315"/>
    </location>
</feature>
<feature type="transmembrane region" description="Helical" evidence="3">
    <location>
        <begin position="390"/>
        <end position="410"/>
    </location>
</feature>
<feature type="domain" description="Reticulon" evidence="4">
    <location>
        <begin position="272"/>
        <end position="471"/>
    </location>
</feature>
<feature type="region of interest" description="Disordered" evidence="5">
    <location>
        <begin position="1"/>
        <end position="137"/>
    </location>
</feature>
<feature type="region of interest" description="Disordered" evidence="5">
    <location>
        <begin position="153"/>
        <end position="181"/>
    </location>
</feature>
<feature type="region of interest" description="Disordered" evidence="5">
    <location>
        <begin position="205"/>
        <end position="234"/>
    </location>
</feature>
<feature type="compositionally biased region" description="Low complexity" evidence="5">
    <location>
        <begin position="14"/>
        <end position="25"/>
    </location>
</feature>
<feature type="compositionally biased region" description="Basic and acidic residues" evidence="5">
    <location>
        <begin position="32"/>
        <end position="43"/>
    </location>
</feature>
<feature type="compositionally biased region" description="Polar residues" evidence="5">
    <location>
        <begin position="100"/>
        <end position="118"/>
    </location>
</feature>
<feature type="compositionally biased region" description="Polar residues" evidence="5">
    <location>
        <begin position="159"/>
        <end position="168"/>
    </location>
</feature>
<feature type="compositionally biased region" description="Acidic residues" evidence="5">
    <location>
        <begin position="169"/>
        <end position="181"/>
    </location>
</feature>
<feature type="compositionally biased region" description="Polar residues" evidence="5">
    <location>
        <begin position="205"/>
        <end position="229"/>
    </location>
</feature>
<feature type="modified residue" description="Phosphoserine" evidence="11 12">
    <location>
        <position position="44"/>
    </location>
</feature>
<feature type="modified residue" description="Phosphoserine" evidence="12">
    <location>
        <position position="226"/>
    </location>
</feature>
<feature type="modified residue" description="Phosphoserine" evidence="12">
    <location>
        <position position="228"/>
    </location>
</feature>
<feature type="splice variant" id="VSP_005650" description="In isoform 2." evidence="9">
    <location>
        <begin position="1"/>
        <end position="267"/>
    </location>
</feature>
<feature type="splice variant" id="VSP_005651" description="In isoform 2." evidence="9">
    <original>PLLL</original>
    <variation>MGSK</variation>
    <location>
        <begin position="268"/>
        <end position="271"/>
    </location>
</feature>
<name>RTN2_MOUSE</name>